<accession>Q5P4E5</accession>
<organism>
    <name type="scientific">Aromatoleum aromaticum (strain DSM 19018 / LMG 30748 / EbN1)</name>
    <name type="common">Azoarcus sp. (strain EbN1)</name>
    <dbReference type="NCBI Taxonomy" id="76114"/>
    <lineage>
        <taxon>Bacteria</taxon>
        <taxon>Pseudomonadati</taxon>
        <taxon>Pseudomonadota</taxon>
        <taxon>Betaproteobacteria</taxon>
        <taxon>Rhodocyclales</taxon>
        <taxon>Rhodocyclaceae</taxon>
        <taxon>Aromatoleum</taxon>
    </lineage>
</organism>
<sequence length="178" mass="19210">MAENVTIARPYADAAFELARGAGALGPWSEALDRLAAAAADASMKACISNPKLSADQLYQLFIDVAGQGFTPELQNFVRVLVDNERLQMLPEIRDLFVELKNEHEGVQEAEIASAFPLDDATLANLKADLETRFKTRLNTKVSLDPELIGGVRIAIGDEVIDASVRGKLANMAAALKN</sequence>
<comment type="function">
    <text evidence="1">F(1)F(0) ATP synthase produces ATP from ADP in the presence of a proton or sodium gradient. F-type ATPases consist of two structural domains, F(1) containing the extramembraneous catalytic core and F(0) containing the membrane proton channel, linked together by a central stalk and a peripheral stalk. During catalysis, ATP synthesis in the catalytic domain of F(1) is coupled via a rotary mechanism of the central stalk subunits to proton translocation.</text>
</comment>
<comment type="function">
    <text evidence="1">This protein is part of the stalk that links CF(0) to CF(1). It either transmits conformational changes from CF(0) to CF(1) or is implicated in proton conduction.</text>
</comment>
<comment type="subunit">
    <text evidence="1">F-type ATPases have 2 components, F(1) - the catalytic core - and F(0) - the membrane proton channel. F(1) has five subunits: alpha(3), beta(3), gamma(1), delta(1), epsilon(1). F(0) has three main subunits: a(1), b(2) and c(10-14). The alpha and beta chains form an alternating ring which encloses part of the gamma chain. F(1) is attached to F(0) by a central stalk formed by the gamma and epsilon chains, while a peripheral stalk is formed by the delta and b chains.</text>
</comment>
<comment type="subcellular location">
    <subcellularLocation>
        <location evidence="1">Cell inner membrane</location>
        <topology evidence="1">Peripheral membrane protein</topology>
    </subcellularLocation>
</comment>
<comment type="similarity">
    <text evidence="1">Belongs to the ATPase delta chain family.</text>
</comment>
<dbReference type="EMBL" id="CR555306">
    <property type="protein sequence ID" value="CAI07818.1"/>
    <property type="molecule type" value="Genomic_DNA"/>
</dbReference>
<dbReference type="RefSeq" id="WP_011237532.1">
    <property type="nucleotide sequence ID" value="NC_006513.1"/>
</dbReference>
<dbReference type="SMR" id="Q5P4E5"/>
<dbReference type="STRING" id="76114.ebA3003"/>
<dbReference type="KEGG" id="eba:ebA3003"/>
<dbReference type="eggNOG" id="COG0712">
    <property type="taxonomic scope" value="Bacteria"/>
</dbReference>
<dbReference type="HOGENOM" id="CLU_085114_3_0_4"/>
<dbReference type="OrthoDB" id="9816221at2"/>
<dbReference type="Proteomes" id="UP000006552">
    <property type="component" value="Chromosome"/>
</dbReference>
<dbReference type="GO" id="GO:0005886">
    <property type="term" value="C:plasma membrane"/>
    <property type="evidence" value="ECO:0007669"/>
    <property type="project" value="UniProtKB-SubCell"/>
</dbReference>
<dbReference type="GO" id="GO:0045259">
    <property type="term" value="C:proton-transporting ATP synthase complex"/>
    <property type="evidence" value="ECO:0007669"/>
    <property type="project" value="UniProtKB-KW"/>
</dbReference>
<dbReference type="GO" id="GO:0046933">
    <property type="term" value="F:proton-transporting ATP synthase activity, rotational mechanism"/>
    <property type="evidence" value="ECO:0007669"/>
    <property type="project" value="UniProtKB-UniRule"/>
</dbReference>
<dbReference type="Gene3D" id="1.10.520.20">
    <property type="entry name" value="N-terminal domain of the delta subunit of the F1F0-ATP synthase"/>
    <property type="match status" value="1"/>
</dbReference>
<dbReference type="HAMAP" id="MF_01416">
    <property type="entry name" value="ATP_synth_delta_bact"/>
    <property type="match status" value="1"/>
</dbReference>
<dbReference type="InterPro" id="IPR026015">
    <property type="entry name" value="ATP_synth_OSCP/delta_N_sf"/>
</dbReference>
<dbReference type="InterPro" id="IPR000711">
    <property type="entry name" value="ATPase_OSCP/dsu"/>
</dbReference>
<dbReference type="NCBIfam" id="TIGR01145">
    <property type="entry name" value="ATP_synt_delta"/>
    <property type="match status" value="1"/>
</dbReference>
<dbReference type="NCBIfam" id="NF004402">
    <property type="entry name" value="PRK05758.2-2"/>
    <property type="match status" value="1"/>
</dbReference>
<dbReference type="PANTHER" id="PTHR11910">
    <property type="entry name" value="ATP SYNTHASE DELTA CHAIN"/>
    <property type="match status" value="1"/>
</dbReference>
<dbReference type="Pfam" id="PF00213">
    <property type="entry name" value="OSCP"/>
    <property type="match status" value="1"/>
</dbReference>
<dbReference type="PRINTS" id="PR00125">
    <property type="entry name" value="ATPASEDELTA"/>
</dbReference>
<dbReference type="SUPFAM" id="SSF47928">
    <property type="entry name" value="N-terminal domain of the delta subunit of the F1F0-ATP synthase"/>
    <property type="match status" value="1"/>
</dbReference>
<feature type="chain" id="PRO_0000370884" description="ATP synthase subunit delta">
    <location>
        <begin position="1"/>
        <end position="178"/>
    </location>
</feature>
<protein>
    <recommendedName>
        <fullName evidence="1">ATP synthase subunit delta</fullName>
    </recommendedName>
    <alternativeName>
        <fullName evidence="1">ATP synthase F(1) sector subunit delta</fullName>
    </alternativeName>
    <alternativeName>
        <fullName evidence="1">F-type ATPase subunit delta</fullName>
        <shortName evidence="1">F-ATPase subunit delta</shortName>
    </alternativeName>
</protein>
<keyword id="KW-0066">ATP synthesis</keyword>
<keyword id="KW-0997">Cell inner membrane</keyword>
<keyword id="KW-1003">Cell membrane</keyword>
<keyword id="KW-0139">CF(1)</keyword>
<keyword id="KW-0375">Hydrogen ion transport</keyword>
<keyword id="KW-0406">Ion transport</keyword>
<keyword id="KW-0472">Membrane</keyword>
<keyword id="KW-1185">Reference proteome</keyword>
<keyword id="KW-0813">Transport</keyword>
<evidence type="ECO:0000255" key="1">
    <source>
        <dbReference type="HAMAP-Rule" id="MF_01416"/>
    </source>
</evidence>
<gene>
    <name evidence="1" type="primary">atpH</name>
    <name type="ordered locus">AZOSEA16930</name>
    <name type="ORF">ebA3003</name>
</gene>
<name>ATPD_AROAE</name>
<reference key="1">
    <citation type="journal article" date="2005" name="Arch. Microbiol.">
        <title>The genome sequence of an anaerobic aromatic-degrading denitrifying bacterium, strain EbN1.</title>
        <authorList>
            <person name="Rabus R."/>
            <person name="Kube M."/>
            <person name="Heider J."/>
            <person name="Beck A."/>
            <person name="Heitmann K."/>
            <person name="Widdel F."/>
            <person name="Reinhardt R."/>
        </authorList>
    </citation>
    <scope>NUCLEOTIDE SEQUENCE [LARGE SCALE GENOMIC DNA]</scope>
    <source>
        <strain>DSM 19018 / LMG 30748 / EbN1</strain>
    </source>
</reference>
<proteinExistence type="inferred from homology"/>